<proteinExistence type="evidence at protein level"/>
<evidence type="ECO:0000269" key="1">
    <source>
    </source>
</evidence>
<evidence type="ECO:0000303" key="2">
    <source>
    </source>
</evidence>
<evidence type="ECO:0000305" key="3"/>
<keyword id="KW-0929">Antimicrobial</keyword>
<keyword id="KW-0204">Cytolysis</keyword>
<keyword id="KW-0903">Direct protein sequencing</keyword>
<keyword id="KW-0295">Fungicide</keyword>
<keyword id="KW-0354">Hemolysis</keyword>
<keyword id="KW-0611">Plant defense</keyword>
<keyword id="KW-1185">Reference proteome</keyword>
<accession>P86796</accession>
<comment type="function">
    <text evidence="1">Has strong antifungal activity against B.cinerea, C.albicans, C.coccodes, F.oxysporum, F.solani, T.harzianum and T.viride with EC(50) values of 20 uM, 20 uM, 10 uM, 10 uM, 10 uM, 20 uM and 20 uM, respectively. Has antifungal activity against A.fumigatus, A.parasiticus and D.byroniae with EC(50) values of 40 uM, 80 uM and 40 uM, respectively. Lacks antifungal activity against P.verrucosum var. verrucosum. Lacks antibacterial activity against the Gram-negative bacterium E.coli and against the Gram-positive bacterium S.aureus. Has very low hemolytic activity against human erythrocytes. Increases fungal cell membrane permeability, probably by disrupting the membrane structure.</text>
</comment>
<comment type="mass spectrometry"/>
<sequence>QGIGVGDNDGKRGKR</sequence>
<feature type="chain" id="PRO_0000403319" description="Antifungal protein Pr-2">
    <location>
        <begin position="1"/>
        <end position="15" status="greater than"/>
    </location>
</feature>
<feature type="non-terminal residue" evidence="2">
    <location>
        <position position="15"/>
    </location>
</feature>
<protein>
    <recommendedName>
        <fullName evidence="2">Antifungal protein Pr-2</fullName>
    </recommendedName>
</protein>
<name>AFPR2_CUCMA</name>
<dbReference type="Proteomes" id="UP000504608">
    <property type="component" value="Unplaced"/>
</dbReference>
<dbReference type="GO" id="GO:0050832">
    <property type="term" value="P:defense response to fungus"/>
    <property type="evidence" value="ECO:0007669"/>
    <property type="project" value="UniProtKB-KW"/>
</dbReference>
<dbReference type="GO" id="GO:0031640">
    <property type="term" value="P:killing of cells of another organism"/>
    <property type="evidence" value="ECO:0007669"/>
    <property type="project" value="UniProtKB-KW"/>
</dbReference>
<organism>
    <name type="scientific">Cucurbita maxima</name>
    <name type="common">Pumpkin</name>
    <name type="synonym">Winter squash</name>
    <dbReference type="NCBI Taxonomy" id="3661"/>
    <lineage>
        <taxon>Eukaryota</taxon>
        <taxon>Viridiplantae</taxon>
        <taxon>Streptophyta</taxon>
        <taxon>Embryophyta</taxon>
        <taxon>Tracheophyta</taxon>
        <taxon>Spermatophyta</taxon>
        <taxon>Magnoliopsida</taxon>
        <taxon>eudicotyledons</taxon>
        <taxon>Gunneridae</taxon>
        <taxon>Pentapetalae</taxon>
        <taxon>rosids</taxon>
        <taxon>fabids</taxon>
        <taxon>Cucurbitales</taxon>
        <taxon>Cucurbitaceae</taxon>
        <taxon>Cucurbiteae</taxon>
        <taxon>Cucurbita</taxon>
    </lineage>
</organism>
<reference evidence="3" key="1">
    <citation type="journal article" date="2009" name="J. Agric. Food Chem.">
        <title>Antifungal mechanism of a novel antifungal protein from pumpkin rinds against various fungal pathogens.</title>
        <authorList>
            <person name="Park S.C."/>
            <person name="Kim J.Y."/>
            <person name="Lee J.K."/>
            <person name="Hwang I."/>
            <person name="Cheong H."/>
            <person name="Nah J.W."/>
            <person name="Hahm K.S."/>
            <person name="Park Y."/>
        </authorList>
    </citation>
    <scope>PROTEIN SEQUENCE</scope>
    <scope>FUNCTION</scope>
    <scope>MASS SPECTROMETRY</scope>
    <source>
        <tissue evidence="1">Peelings</tissue>
    </source>
</reference>